<proteinExistence type="inferred from homology"/>
<gene>
    <name evidence="1" type="primary">msrB</name>
    <name type="ordered locus">SFV_1437</name>
</gene>
<dbReference type="EC" id="1.8.4.12" evidence="1"/>
<dbReference type="EMBL" id="CP000266">
    <property type="protein sequence ID" value="ABF03630.1"/>
    <property type="molecule type" value="Genomic_DNA"/>
</dbReference>
<dbReference type="RefSeq" id="WP_001284613.1">
    <property type="nucleotide sequence ID" value="NC_008258.1"/>
</dbReference>
<dbReference type="SMR" id="Q0T4Y5"/>
<dbReference type="KEGG" id="sfv:SFV_1437"/>
<dbReference type="HOGENOM" id="CLU_031040_8_5_6"/>
<dbReference type="Proteomes" id="UP000000659">
    <property type="component" value="Chromosome"/>
</dbReference>
<dbReference type="GO" id="GO:0005737">
    <property type="term" value="C:cytoplasm"/>
    <property type="evidence" value="ECO:0007669"/>
    <property type="project" value="TreeGrafter"/>
</dbReference>
<dbReference type="GO" id="GO:0033743">
    <property type="term" value="F:peptide-methionine (R)-S-oxide reductase activity"/>
    <property type="evidence" value="ECO:0007669"/>
    <property type="project" value="UniProtKB-UniRule"/>
</dbReference>
<dbReference type="GO" id="GO:0008270">
    <property type="term" value="F:zinc ion binding"/>
    <property type="evidence" value="ECO:0007669"/>
    <property type="project" value="UniProtKB-UniRule"/>
</dbReference>
<dbReference type="GO" id="GO:0030091">
    <property type="term" value="P:protein repair"/>
    <property type="evidence" value="ECO:0007669"/>
    <property type="project" value="InterPro"/>
</dbReference>
<dbReference type="GO" id="GO:0006979">
    <property type="term" value="P:response to oxidative stress"/>
    <property type="evidence" value="ECO:0007669"/>
    <property type="project" value="InterPro"/>
</dbReference>
<dbReference type="FunFam" id="2.170.150.20:FF:000001">
    <property type="entry name" value="Peptide methionine sulfoxide reductase MsrB"/>
    <property type="match status" value="1"/>
</dbReference>
<dbReference type="Gene3D" id="2.170.150.20">
    <property type="entry name" value="Peptide methionine sulfoxide reductase"/>
    <property type="match status" value="1"/>
</dbReference>
<dbReference type="HAMAP" id="MF_01400">
    <property type="entry name" value="MsrB"/>
    <property type="match status" value="1"/>
</dbReference>
<dbReference type="InterPro" id="IPR028427">
    <property type="entry name" value="Met_Sox_Rdtase_MsrB"/>
</dbReference>
<dbReference type="InterPro" id="IPR002579">
    <property type="entry name" value="Met_Sox_Rdtase_MsrB_dom"/>
</dbReference>
<dbReference type="InterPro" id="IPR011057">
    <property type="entry name" value="Mss4-like_sf"/>
</dbReference>
<dbReference type="NCBIfam" id="TIGR00357">
    <property type="entry name" value="peptide-methionine (R)-S-oxide reductase MsrB"/>
    <property type="match status" value="1"/>
</dbReference>
<dbReference type="PANTHER" id="PTHR10173">
    <property type="entry name" value="METHIONINE SULFOXIDE REDUCTASE"/>
    <property type="match status" value="1"/>
</dbReference>
<dbReference type="PANTHER" id="PTHR10173:SF52">
    <property type="entry name" value="METHIONINE-R-SULFOXIDE REDUCTASE B1"/>
    <property type="match status" value="1"/>
</dbReference>
<dbReference type="Pfam" id="PF01641">
    <property type="entry name" value="SelR"/>
    <property type="match status" value="1"/>
</dbReference>
<dbReference type="SUPFAM" id="SSF51316">
    <property type="entry name" value="Mss4-like"/>
    <property type="match status" value="1"/>
</dbReference>
<dbReference type="PROSITE" id="PS51790">
    <property type="entry name" value="MSRB"/>
    <property type="match status" value="1"/>
</dbReference>
<keyword id="KW-0479">Metal-binding</keyword>
<keyword id="KW-0560">Oxidoreductase</keyword>
<keyword id="KW-0862">Zinc</keyword>
<reference key="1">
    <citation type="journal article" date="2006" name="BMC Genomics">
        <title>Complete genome sequence of Shigella flexneri 5b and comparison with Shigella flexneri 2a.</title>
        <authorList>
            <person name="Nie H."/>
            <person name="Yang F."/>
            <person name="Zhang X."/>
            <person name="Yang J."/>
            <person name="Chen L."/>
            <person name="Wang J."/>
            <person name="Xiong Z."/>
            <person name="Peng J."/>
            <person name="Sun L."/>
            <person name="Dong J."/>
            <person name="Xue Y."/>
            <person name="Xu X."/>
            <person name="Chen S."/>
            <person name="Yao Z."/>
            <person name="Shen Y."/>
            <person name="Jin Q."/>
        </authorList>
    </citation>
    <scope>NUCLEOTIDE SEQUENCE [LARGE SCALE GENOMIC DNA]</scope>
    <source>
        <strain>8401</strain>
    </source>
</reference>
<evidence type="ECO:0000255" key="1">
    <source>
        <dbReference type="HAMAP-Rule" id="MF_01400"/>
    </source>
</evidence>
<evidence type="ECO:0000255" key="2">
    <source>
        <dbReference type="PROSITE-ProRule" id="PRU01126"/>
    </source>
</evidence>
<accession>Q0T4Y5</accession>
<name>MSRB_SHIF8</name>
<protein>
    <recommendedName>
        <fullName evidence="1">Peptide methionine sulfoxide reductase MsrB</fullName>
        <ecNumber evidence="1">1.8.4.12</ecNumber>
    </recommendedName>
    <alternativeName>
        <fullName evidence="1">Peptide-methionine (R)-S-oxide reductase</fullName>
    </alternativeName>
</protein>
<comment type="catalytic activity">
    <reaction evidence="1">
        <text>L-methionyl-[protein] + [thioredoxin]-disulfide + H2O = L-methionyl-(R)-S-oxide-[protein] + [thioredoxin]-dithiol</text>
        <dbReference type="Rhea" id="RHEA:24164"/>
        <dbReference type="Rhea" id="RHEA-COMP:10698"/>
        <dbReference type="Rhea" id="RHEA-COMP:10700"/>
        <dbReference type="Rhea" id="RHEA-COMP:12313"/>
        <dbReference type="Rhea" id="RHEA-COMP:12314"/>
        <dbReference type="ChEBI" id="CHEBI:15377"/>
        <dbReference type="ChEBI" id="CHEBI:16044"/>
        <dbReference type="ChEBI" id="CHEBI:29950"/>
        <dbReference type="ChEBI" id="CHEBI:45764"/>
        <dbReference type="ChEBI" id="CHEBI:50058"/>
        <dbReference type="EC" id="1.8.4.12"/>
    </reaction>
</comment>
<comment type="cofactor">
    <cofactor evidence="1">
        <name>Zn(2+)</name>
        <dbReference type="ChEBI" id="CHEBI:29105"/>
    </cofactor>
    <text evidence="1">Binds 1 zinc ion per subunit. The zinc ion is important for the structural integrity of the protein.</text>
</comment>
<comment type="similarity">
    <text evidence="1">Belongs to the MsrB Met sulfoxide reductase family.</text>
</comment>
<organism>
    <name type="scientific">Shigella flexneri serotype 5b (strain 8401)</name>
    <dbReference type="NCBI Taxonomy" id="373384"/>
    <lineage>
        <taxon>Bacteria</taxon>
        <taxon>Pseudomonadati</taxon>
        <taxon>Pseudomonadota</taxon>
        <taxon>Gammaproteobacteria</taxon>
        <taxon>Enterobacterales</taxon>
        <taxon>Enterobacteriaceae</taxon>
        <taxon>Shigella</taxon>
    </lineage>
</organism>
<sequence length="137" mass="15452">MANKPSAEELKKNLSEMQFYVTQNHGTEPPFTGRLLHNKRDGVYHCLICDAPLFHSETKYDSGCGWPSFYEPVSEESIRYIKDLSHGMQRIEIRCGNCDAHLGHVFPDGPQPTGERYCVNSASLRFTDGENGEEING</sequence>
<feature type="chain" id="PRO_1000068293" description="Peptide methionine sulfoxide reductase MsrB">
    <location>
        <begin position="1"/>
        <end position="137"/>
    </location>
</feature>
<feature type="domain" description="MsrB" evidence="2">
    <location>
        <begin position="7"/>
        <end position="129"/>
    </location>
</feature>
<feature type="active site" description="Nucleophile" evidence="2">
    <location>
        <position position="118"/>
    </location>
</feature>
<feature type="binding site" evidence="2">
    <location>
        <position position="46"/>
    </location>
    <ligand>
        <name>Zn(2+)</name>
        <dbReference type="ChEBI" id="CHEBI:29105"/>
    </ligand>
</feature>
<feature type="binding site" evidence="2">
    <location>
        <position position="49"/>
    </location>
    <ligand>
        <name>Zn(2+)</name>
        <dbReference type="ChEBI" id="CHEBI:29105"/>
    </ligand>
</feature>
<feature type="binding site" evidence="2">
    <location>
        <position position="95"/>
    </location>
    <ligand>
        <name>Zn(2+)</name>
        <dbReference type="ChEBI" id="CHEBI:29105"/>
    </ligand>
</feature>
<feature type="binding site" evidence="2">
    <location>
        <position position="98"/>
    </location>
    <ligand>
        <name>Zn(2+)</name>
        <dbReference type="ChEBI" id="CHEBI:29105"/>
    </ligand>
</feature>